<protein>
    <recommendedName>
        <fullName evidence="1">Small ribosomal subunit protein uS2</fullName>
    </recommendedName>
    <alternativeName>
        <fullName evidence="3">30S ribosomal protein S2</fullName>
    </alternativeName>
</protein>
<reference key="1">
    <citation type="submission" date="2009-07" db="EMBL/GenBank/DDBJ databases">
        <title>Complete sequence of Geobacter sp. M21.</title>
        <authorList>
            <consortium name="US DOE Joint Genome Institute"/>
            <person name="Lucas S."/>
            <person name="Copeland A."/>
            <person name="Lapidus A."/>
            <person name="Glavina del Rio T."/>
            <person name="Dalin E."/>
            <person name="Tice H."/>
            <person name="Bruce D."/>
            <person name="Goodwin L."/>
            <person name="Pitluck S."/>
            <person name="Saunders E."/>
            <person name="Brettin T."/>
            <person name="Detter J.C."/>
            <person name="Han C."/>
            <person name="Larimer F."/>
            <person name="Land M."/>
            <person name="Hauser L."/>
            <person name="Kyrpides N."/>
            <person name="Ovchinnikova G."/>
            <person name="Lovley D."/>
        </authorList>
    </citation>
    <scope>NUCLEOTIDE SEQUENCE [LARGE SCALE GENOMIC DNA]</scope>
    <source>
        <strain>M21</strain>
    </source>
</reference>
<name>RS2_GEOSM</name>
<comment type="similarity">
    <text evidence="1">Belongs to the universal ribosomal protein uS2 family.</text>
</comment>
<gene>
    <name evidence="1" type="primary">rpsB</name>
    <name type="ordered locus">GM21_1485</name>
</gene>
<organism>
    <name type="scientific">Geobacter sp. (strain M21)</name>
    <dbReference type="NCBI Taxonomy" id="443144"/>
    <lineage>
        <taxon>Bacteria</taxon>
        <taxon>Pseudomonadati</taxon>
        <taxon>Thermodesulfobacteriota</taxon>
        <taxon>Desulfuromonadia</taxon>
        <taxon>Geobacterales</taxon>
        <taxon>Geobacteraceae</taxon>
        <taxon>Geobacter</taxon>
    </lineage>
</organism>
<keyword id="KW-0687">Ribonucleoprotein</keyword>
<keyword id="KW-0689">Ribosomal protein</keyword>
<dbReference type="EMBL" id="CP001661">
    <property type="protein sequence ID" value="ACT17541.1"/>
    <property type="molecule type" value="Genomic_DNA"/>
</dbReference>
<dbReference type="SMR" id="C6E512"/>
<dbReference type="STRING" id="443144.GM21_1485"/>
<dbReference type="KEGG" id="gem:GM21_1485"/>
<dbReference type="eggNOG" id="COG0052">
    <property type="taxonomic scope" value="Bacteria"/>
</dbReference>
<dbReference type="HOGENOM" id="CLU_040318_1_2_7"/>
<dbReference type="OrthoDB" id="9808036at2"/>
<dbReference type="GO" id="GO:0022627">
    <property type="term" value="C:cytosolic small ribosomal subunit"/>
    <property type="evidence" value="ECO:0007669"/>
    <property type="project" value="TreeGrafter"/>
</dbReference>
<dbReference type="GO" id="GO:0003735">
    <property type="term" value="F:structural constituent of ribosome"/>
    <property type="evidence" value="ECO:0007669"/>
    <property type="project" value="InterPro"/>
</dbReference>
<dbReference type="GO" id="GO:0006412">
    <property type="term" value="P:translation"/>
    <property type="evidence" value="ECO:0007669"/>
    <property type="project" value="UniProtKB-UniRule"/>
</dbReference>
<dbReference type="CDD" id="cd01425">
    <property type="entry name" value="RPS2"/>
    <property type="match status" value="1"/>
</dbReference>
<dbReference type="FunFam" id="1.10.287.610:FF:000001">
    <property type="entry name" value="30S ribosomal protein S2"/>
    <property type="match status" value="1"/>
</dbReference>
<dbReference type="Gene3D" id="3.40.50.10490">
    <property type="entry name" value="Glucose-6-phosphate isomerase like protein, domain 1"/>
    <property type="match status" value="1"/>
</dbReference>
<dbReference type="Gene3D" id="1.10.287.610">
    <property type="entry name" value="Helix hairpin bin"/>
    <property type="match status" value="1"/>
</dbReference>
<dbReference type="HAMAP" id="MF_00291_B">
    <property type="entry name" value="Ribosomal_uS2_B"/>
    <property type="match status" value="1"/>
</dbReference>
<dbReference type="InterPro" id="IPR001865">
    <property type="entry name" value="Ribosomal_uS2"/>
</dbReference>
<dbReference type="InterPro" id="IPR005706">
    <property type="entry name" value="Ribosomal_uS2_bac/mit/plastid"/>
</dbReference>
<dbReference type="InterPro" id="IPR018130">
    <property type="entry name" value="Ribosomal_uS2_CS"/>
</dbReference>
<dbReference type="InterPro" id="IPR023591">
    <property type="entry name" value="Ribosomal_uS2_flav_dom_sf"/>
</dbReference>
<dbReference type="NCBIfam" id="TIGR01011">
    <property type="entry name" value="rpsB_bact"/>
    <property type="match status" value="1"/>
</dbReference>
<dbReference type="PANTHER" id="PTHR12534">
    <property type="entry name" value="30S RIBOSOMAL PROTEIN S2 PROKARYOTIC AND ORGANELLAR"/>
    <property type="match status" value="1"/>
</dbReference>
<dbReference type="PANTHER" id="PTHR12534:SF0">
    <property type="entry name" value="SMALL RIBOSOMAL SUBUNIT PROTEIN US2M"/>
    <property type="match status" value="1"/>
</dbReference>
<dbReference type="Pfam" id="PF00318">
    <property type="entry name" value="Ribosomal_S2"/>
    <property type="match status" value="1"/>
</dbReference>
<dbReference type="PRINTS" id="PR00395">
    <property type="entry name" value="RIBOSOMALS2"/>
</dbReference>
<dbReference type="SUPFAM" id="SSF52313">
    <property type="entry name" value="Ribosomal protein S2"/>
    <property type="match status" value="1"/>
</dbReference>
<dbReference type="PROSITE" id="PS00962">
    <property type="entry name" value="RIBOSOMAL_S2_1"/>
    <property type="match status" value="1"/>
</dbReference>
<dbReference type="PROSITE" id="PS00963">
    <property type="entry name" value="RIBOSOMAL_S2_2"/>
    <property type="match status" value="1"/>
</dbReference>
<accession>C6E512</accession>
<evidence type="ECO:0000255" key="1">
    <source>
        <dbReference type="HAMAP-Rule" id="MF_00291"/>
    </source>
</evidence>
<evidence type="ECO:0000256" key="2">
    <source>
        <dbReference type="SAM" id="MobiDB-lite"/>
    </source>
</evidence>
<evidence type="ECO:0000305" key="3"/>
<feature type="chain" id="PRO_1000204884" description="Small ribosomal subunit protein uS2">
    <location>
        <begin position="1"/>
        <end position="255"/>
    </location>
</feature>
<feature type="region of interest" description="Disordered" evidence="2">
    <location>
        <begin position="231"/>
        <end position="255"/>
    </location>
</feature>
<feature type="compositionally biased region" description="Acidic residues" evidence="2">
    <location>
        <begin position="236"/>
        <end position="255"/>
    </location>
</feature>
<proteinExistence type="inferred from homology"/>
<sequence length="255" mass="28157">MSNITMKELLEAGVHFGHQTKRWNPKMKPYIFGARNGIYIIDLQKTVRLFKNAYSFVTDAAQAGETVLFVGTKKQAQDSVAEEAQRCGQFYVNDRWLGGMLTNFSTVKQSIDRLKRLDAMIADGTIEAYTKKEQLKLAKEREKLEKTLGGIKGMGKVPGVLFVVDPKNEEIAVSEAKKLGIPVVAIVDTNCDPDDINYVIPGNDDAIRAIRLLTSKMADAVLEGGQARNARLQTGAEEEFSTEGEEVVEETPAEA</sequence>